<name>CUTC_XANC8</name>
<reference key="1">
    <citation type="journal article" date="2005" name="Genome Res.">
        <title>Comparative and functional genomic analyses of the pathogenicity of phytopathogen Xanthomonas campestris pv. campestris.</title>
        <authorList>
            <person name="Qian W."/>
            <person name="Jia Y."/>
            <person name="Ren S.-X."/>
            <person name="He Y.-Q."/>
            <person name="Feng J.-X."/>
            <person name="Lu L.-F."/>
            <person name="Sun Q."/>
            <person name="Ying G."/>
            <person name="Tang D.-J."/>
            <person name="Tang H."/>
            <person name="Wu W."/>
            <person name="Hao P."/>
            <person name="Wang L."/>
            <person name="Jiang B.-L."/>
            <person name="Zeng S."/>
            <person name="Gu W.-Y."/>
            <person name="Lu G."/>
            <person name="Rong L."/>
            <person name="Tian Y."/>
            <person name="Yao Z."/>
            <person name="Fu G."/>
            <person name="Chen B."/>
            <person name="Fang R."/>
            <person name="Qiang B."/>
            <person name="Chen Z."/>
            <person name="Zhao G.-P."/>
            <person name="Tang J.-L."/>
            <person name="He C."/>
        </authorList>
    </citation>
    <scope>NUCLEOTIDE SEQUENCE [LARGE SCALE GENOMIC DNA]</scope>
    <source>
        <strain>8004</strain>
    </source>
</reference>
<sequence length="240" mass="24855">MGLEVAADSVGSALAAQDGGAIRVELCGGLDGGGLTPSFGTLAVVRERLQIPLYVLIRPRVGDFVFDAAEVEVMRRDVEQCVRLGCDGVVLGALDPQGQVDLPAMRALIEAAGTLGVTFHRAIDVSADPARVLEDAITLGCERVLTSGARASALEGVETIAALVRQAGERISIMPGAGVSAANVQALRAGTGAREFHASARGPVAAQVHAPHPYITDLGGDYQRTDVARVRSIVQLLQTA</sequence>
<dbReference type="EMBL" id="CP000050">
    <property type="protein sequence ID" value="AAY48265.1"/>
    <property type="molecule type" value="Genomic_DNA"/>
</dbReference>
<dbReference type="SMR" id="Q4UXF8"/>
<dbReference type="KEGG" id="xcb:XC_1196"/>
<dbReference type="HOGENOM" id="CLU_050555_3_1_6"/>
<dbReference type="Proteomes" id="UP000000420">
    <property type="component" value="Chromosome"/>
</dbReference>
<dbReference type="GO" id="GO:0005737">
    <property type="term" value="C:cytoplasm"/>
    <property type="evidence" value="ECO:0007669"/>
    <property type="project" value="UniProtKB-SubCell"/>
</dbReference>
<dbReference type="GO" id="GO:0005507">
    <property type="term" value="F:copper ion binding"/>
    <property type="evidence" value="ECO:0007669"/>
    <property type="project" value="TreeGrafter"/>
</dbReference>
<dbReference type="FunFam" id="3.20.20.380:FF:000007">
    <property type="entry name" value="Copper homeostasis protein CutC"/>
    <property type="match status" value="1"/>
</dbReference>
<dbReference type="Gene3D" id="3.20.20.380">
    <property type="entry name" value="Copper homeostasis (CutC) domain"/>
    <property type="match status" value="1"/>
</dbReference>
<dbReference type="HAMAP" id="MF_00795">
    <property type="entry name" value="CutC"/>
    <property type="match status" value="1"/>
</dbReference>
<dbReference type="InterPro" id="IPR005627">
    <property type="entry name" value="CutC-like"/>
</dbReference>
<dbReference type="InterPro" id="IPR036822">
    <property type="entry name" value="CutC-like_dom_sf"/>
</dbReference>
<dbReference type="PANTHER" id="PTHR12598">
    <property type="entry name" value="COPPER HOMEOSTASIS PROTEIN CUTC"/>
    <property type="match status" value="1"/>
</dbReference>
<dbReference type="PANTHER" id="PTHR12598:SF0">
    <property type="entry name" value="COPPER HOMEOSTASIS PROTEIN CUTC HOMOLOG"/>
    <property type="match status" value="1"/>
</dbReference>
<dbReference type="Pfam" id="PF03932">
    <property type="entry name" value="CutC"/>
    <property type="match status" value="1"/>
</dbReference>
<dbReference type="SUPFAM" id="SSF110395">
    <property type="entry name" value="CutC-like"/>
    <property type="match status" value="1"/>
</dbReference>
<feature type="chain" id="PRO_1000046948" description="PF03932 family protein CutC">
    <location>
        <begin position="1"/>
        <end position="240"/>
    </location>
</feature>
<keyword id="KW-0963">Cytoplasm</keyword>
<proteinExistence type="inferred from homology"/>
<protein>
    <recommendedName>
        <fullName evidence="1">PF03932 family protein CutC</fullName>
    </recommendedName>
</protein>
<accession>Q4UXF8</accession>
<gene>
    <name evidence="1" type="primary">cutC</name>
    <name type="ordered locus">XC_1196</name>
</gene>
<comment type="subcellular location">
    <subcellularLocation>
        <location evidence="1">Cytoplasm</location>
    </subcellularLocation>
</comment>
<comment type="similarity">
    <text evidence="1">Belongs to the CutC family.</text>
</comment>
<comment type="caution">
    <text evidence="1">Once thought to be involved in copper homeostasis, experiments in E.coli have shown this is not the case.</text>
</comment>
<evidence type="ECO:0000255" key="1">
    <source>
        <dbReference type="HAMAP-Rule" id="MF_00795"/>
    </source>
</evidence>
<organism>
    <name type="scientific">Xanthomonas campestris pv. campestris (strain 8004)</name>
    <dbReference type="NCBI Taxonomy" id="314565"/>
    <lineage>
        <taxon>Bacteria</taxon>
        <taxon>Pseudomonadati</taxon>
        <taxon>Pseudomonadota</taxon>
        <taxon>Gammaproteobacteria</taxon>
        <taxon>Lysobacterales</taxon>
        <taxon>Lysobacteraceae</taxon>
        <taxon>Xanthomonas</taxon>
    </lineage>
</organism>